<feature type="chain" id="PRO_0000233894" description="Transmembrane protein 230">
    <location>
        <begin position="1"/>
        <end position="120"/>
    </location>
</feature>
<feature type="transmembrane region" description="Helical" evidence="2">
    <location>
        <begin position="46"/>
        <end position="66"/>
    </location>
</feature>
<feature type="transmembrane region" description="Helical" evidence="2">
    <location>
        <begin position="79"/>
        <end position="99"/>
    </location>
</feature>
<feature type="modified residue" description="Phosphoserine" evidence="1">
    <location>
        <position position="15"/>
    </location>
</feature>
<feature type="modified residue" description="Phosphoserine" evidence="1">
    <location>
        <position position="23"/>
    </location>
</feature>
<feature type="modified residue" description="Phosphoserine" evidence="1">
    <location>
        <position position="24"/>
    </location>
</feature>
<organism>
    <name type="scientific">Pongo abelii</name>
    <name type="common">Sumatran orangutan</name>
    <name type="synonym">Pongo pygmaeus abelii</name>
    <dbReference type="NCBI Taxonomy" id="9601"/>
    <lineage>
        <taxon>Eukaryota</taxon>
        <taxon>Metazoa</taxon>
        <taxon>Chordata</taxon>
        <taxon>Craniata</taxon>
        <taxon>Vertebrata</taxon>
        <taxon>Euteleostomi</taxon>
        <taxon>Mammalia</taxon>
        <taxon>Eutheria</taxon>
        <taxon>Euarchontoglires</taxon>
        <taxon>Primates</taxon>
        <taxon>Haplorrhini</taxon>
        <taxon>Catarrhini</taxon>
        <taxon>Hominidae</taxon>
        <taxon>Pongo</taxon>
    </lineage>
</organism>
<proteinExistence type="evidence at transcript level"/>
<comment type="function">
    <text evidence="1">Involved in trafficking and recycling of synaptic vesicles.</text>
</comment>
<comment type="subcellular location">
    <subcellularLocation>
        <location evidence="3">Membrane</location>
        <topology evidence="3">Multi-pass membrane protein</topology>
    </subcellularLocation>
    <subcellularLocation>
        <location evidence="1">Golgi apparatus</location>
        <location evidence="1">trans-Golgi network</location>
    </subcellularLocation>
    <subcellularLocation>
        <location evidence="1">Cytoplasmic vesicle</location>
        <location evidence="1">Secretory vesicle</location>
        <location evidence="1">Synaptic vesicle</location>
    </subcellularLocation>
    <subcellularLocation>
        <location evidence="1">Early endosome</location>
    </subcellularLocation>
    <subcellularLocation>
        <location evidence="1">Recycling endosome</location>
    </subcellularLocation>
    <subcellularLocation>
        <location evidence="1">Late endosome</location>
    </subcellularLocation>
    <subcellularLocation>
        <location evidence="1">Cytoplasmic vesicle</location>
        <location evidence="1">Autophagosome</location>
    </subcellularLocation>
</comment>
<comment type="similarity">
    <text evidence="3">Belongs to the TMEM134/TMEM230 family.</text>
</comment>
<gene>
    <name type="primary">TMEM230</name>
</gene>
<keyword id="KW-0968">Cytoplasmic vesicle</keyword>
<keyword id="KW-0967">Endosome</keyword>
<keyword id="KW-0333">Golgi apparatus</keyword>
<keyword id="KW-0472">Membrane</keyword>
<keyword id="KW-0597">Phosphoprotein</keyword>
<keyword id="KW-1185">Reference proteome</keyword>
<keyword id="KW-0770">Synapse</keyword>
<keyword id="KW-0812">Transmembrane</keyword>
<keyword id="KW-1133">Transmembrane helix</keyword>
<evidence type="ECO:0000250" key="1">
    <source>
        <dbReference type="UniProtKB" id="Q96A57"/>
    </source>
</evidence>
<evidence type="ECO:0000255" key="2"/>
<evidence type="ECO:0000305" key="3"/>
<protein>
    <recommendedName>
        <fullName>Transmembrane protein 230</fullName>
    </recommendedName>
</protein>
<reference key="1">
    <citation type="submission" date="2004-11" db="EMBL/GenBank/DDBJ databases">
        <authorList>
            <consortium name="The German cDNA consortium"/>
        </authorList>
    </citation>
    <scope>NUCLEOTIDE SEQUENCE [LARGE SCALE MRNA]</scope>
    <source>
        <tissue>Brain cortex</tissue>
    </source>
</reference>
<accession>Q5R8X3</accession>
<name>TM230_PONAB</name>
<sequence>MMPSRTNLATGIPSSKVKYSRLSSTDDGYIDLQFKKTPPKIPYKAIALATGLFLIGAFLIIIGSLLLSGYISKGGADRAIPVLIIGILVFLPGFYHLRIAYYASKGYRGYSYDDIPDFDD</sequence>
<dbReference type="EMBL" id="CR859625">
    <property type="protein sequence ID" value="CAH91787.1"/>
    <property type="molecule type" value="mRNA"/>
</dbReference>
<dbReference type="RefSeq" id="NP_001126037.1">
    <property type="nucleotide sequence ID" value="NM_001132565.1"/>
</dbReference>
<dbReference type="STRING" id="9601.ENSPPYP00000012060"/>
<dbReference type="GeneID" id="100172986"/>
<dbReference type="KEGG" id="pon:100172986"/>
<dbReference type="CTD" id="29058"/>
<dbReference type="eggNOG" id="KOG4753">
    <property type="taxonomic scope" value="Eukaryota"/>
</dbReference>
<dbReference type="InParanoid" id="Q5R8X3"/>
<dbReference type="OrthoDB" id="5597044at2759"/>
<dbReference type="Proteomes" id="UP000001595">
    <property type="component" value="Unplaced"/>
</dbReference>
<dbReference type="GO" id="GO:0005776">
    <property type="term" value="C:autophagosome"/>
    <property type="evidence" value="ECO:0007669"/>
    <property type="project" value="UniProtKB-SubCell"/>
</dbReference>
<dbReference type="GO" id="GO:0005769">
    <property type="term" value="C:early endosome"/>
    <property type="evidence" value="ECO:0000250"/>
    <property type="project" value="UniProtKB"/>
</dbReference>
<dbReference type="GO" id="GO:0005770">
    <property type="term" value="C:late endosome"/>
    <property type="evidence" value="ECO:0000250"/>
    <property type="project" value="UniProtKB"/>
</dbReference>
<dbReference type="GO" id="GO:0016020">
    <property type="term" value="C:membrane"/>
    <property type="evidence" value="ECO:0007669"/>
    <property type="project" value="UniProtKB-SubCell"/>
</dbReference>
<dbReference type="GO" id="GO:0055037">
    <property type="term" value="C:recycling endosome"/>
    <property type="evidence" value="ECO:0000250"/>
    <property type="project" value="UniProtKB"/>
</dbReference>
<dbReference type="GO" id="GO:0008021">
    <property type="term" value="C:synaptic vesicle"/>
    <property type="evidence" value="ECO:0000250"/>
    <property type="project" value="UniProtKB"/>
</dbReference>
<dbReference type="GO" id="GO:0005802">
    <property type="term" value="C:trans-Golgi network"/>
    <property type="evidence" value="ECO:0000250"/>
    <property type="project" value="UniProtKB"/>
</dbReference>
<dbReference type="GO" id="GO:0048489">
    <property type="term" value="P:synaptic vesicle transport"/>
    <property type="evidence" value="ECO:0000250"/>
    <property type="project" value="UniProtKB"/>
</dbReference>
<dbReference type="InterPro" id="IPR044234">
    <property type="entry name" value="TMEM230"/>
</dbReference>
<dbReference type="InterPro" id="IPR008590">
    <property type="entry name" value="TMEM_230/134"/>
</dbReference>
<dbReference type="PANTHER" id="PTHR15664">
    <property type="entry name" value="C20ORF30 PROTEIN"/>
    <property type="match status" value="1"/>
</dbReference>
<dbReference type="PANTHER" id="PTHR15664:SF6">
    <property type="entry name" value="TRANSMEMBRANE PROTEIN 230"/>
    <property type="match status" value="1"/>
</dbReference>
<dbReference type="Pfam" id="PF05915">
    <property type="entry name" value="TMEM_230_134"/>
    <property type="match status" value="1"/>
</dbReference>